<proteinExistence type="inferred from homology"/>
<feature type="chain" id="PRO_1000200034" description="Putative manganese efflux pump MntP">
    <location>
        <begin position="1"/>
        <end position="188"/>
    </location>
</feature>
<feature type="transmembrane region" description="Helical" evidence="1">
    <location>
        <begin position="3"/>
        <end position="23"/>
    </location>
</feature>
<feature type="transmembrane region" description="Helical" evidence="1">
    <location>
        <begin position="41"/>
        <end position="61"/>
    </location>
</feature>
<feature type="transmembrane region" description="Helical" evidence="1">
    <location>
        <begin position="62"/>
        <end position="82"/>
    </location>
</feature>
<feature type="transmembrane region" description="Helical" evidence="1">
    <location>
        <begin position="107"/>
        <end position="129"/>
    </location>
</feature>
<feature type="transmembrane region" description="Helical" evidence="1">
    <location>
        <begin position="143"/>
        <end position="163"/>
    </location>
</feature>
<feature type="transmembrane region" description="Helical" evidence="1">
    <location>
        <begin position="168"/>
        <end position="188"/>
    </location>
</feature>
<dbReference type="EMBL" id="CP000964">
    <property type="protein sequence ID" value="ACI09635.1"/>
    <property type="molecule type" value="Genomic_DNA"/>
</dbReference>
<dbReference type="KEGG" id="kpe:KPK_1956"/>
<dbReference type="HOGENOM" id="CLU_096410_0_0_6"/>
<dbReference type="Proteomes" id="UP000001734">
    <property type="component" value="Chromosome"/>
</dbReference>
<dbReference type="GO" id="GO:0005886">
    <property type="term" value="C:plasma membrane"/>
    <property type="evidence" value="ECO:0007669"/>
    <property type="project" value="UniProtKB-SubCell"/>
</dbReference>
<dbReference type="GO" id="GO:0005384">
    <property type="term" value="F:manganese ion transmembrane transporter activity"/>
    <property type="evidence" value="ECO:0007669"/>
    <property type="project" value="UniProtKB-UniRule"/>
</dbReference>
<dbReference type="HAMAP" id="MF_01521">
    <property type="entry name" value="MntP_pump"/>
    <property type="match status" value="1"/>
</dbReference>
<dbReference type="InterPro" id="IPR003810">
    <property type="entry name" value="Mntp/YtaF"/>
</dbReference>
<dbReference type="InterPro" id="IPR022929">
    <property type="entry name" value="Put_MntP"/>
</dbReference>
<dbReference type="NCBIfam" id="NF008546">
    <property type="entry name" value="PRK11469.1"/>
    <property type="match status" value="1"/>
</dbReference>
<dbReference type="PANTHER" id="PTHR35529">
    <property type="entry name" value="MANGANESE EFFLUX PUMP MNTP-RELATED"/>
    <property type="match status" value="1"/>
</dbReference>
<dbReference type="PANTHER" id="PTHR35529:SF1">
    <property type="entry name" value="MANGANESE EFFLUX PUMP MNTP-RELATED"/>
    <property type="match status" value="1"/>
</dbReference>
<dbReference type="Pfam" id="PF02659">
    <property type="entry name" value="Mntp"/>
    <property type="match status" value="1"/>
</dbReference>
<reference key="1">
    <citation type="journal article" date="2008" name="PLoS Genet.">
        <title>Complete genome sequence of the N2-fixing broad host range endophyte Klebsiella pneumoniae 342 and virulence predictions verified in mice.</title>
        <authorList>
            <person name="Fouts D.E."/>
            <person name="Tyler H.L."/>
            <person name="DeBoy R.T."/>
            <person name="Daugherty S."/>
            <person name="Ren Q."/>
            <person name="Badger J.H."/>
            <person name="Durkin A.S."/>
            <person name="Huot H."/>
            <person name="Shrivastava S."/>
            <person name="Kothari S."/>
            <person name="Dodson R.J."/>
            <person name="Mohamoud Y."/>
            <person name="Khouri H."/>
            <person name="Roesch L.F.W."/>
            <person name="Krogfelt K.A."/>
            <person name="Struve C."/>
            <person name="Triplett E.W."/>
            <person name="Methe B.A."/>
        </authorList>
    </citation>
    <scope>NUCLEOTIDE SEQUENCE [LARGE SCALE GENOMIC DNA]</scope>
    <source>
        <strain>342</strain>
    </source>
</reference>
<keyword id="KW-0997">Cell inner membrane</keyword>
<keyword id="KW-1003">Cell membrane</keyword>
<keyword id="KW-0406">Ion transport</keyword>
<keyword id="KW-0464">Manganese</keyword>
<keyword id="KW-0472">Membrane</keyword>
<keyword id="KW-0812">Transmembrane</keyword>
<keyword id="KW-1133">Transmembrane helix</keyword>
<keyword id="KW-0813">Transport</keyword>
<organism>
    <name type="scientific">Klebsiella pneumoniae (strain 342)</name>
    <dbReference type="NCBI Taxonomy" id="507522"/>
    <lineage>
        <taxon>Bacteria</taxon>
        <taxon>Pseudomonadati</taxon>
        <taxon>Pseudomonadota</taxon>
        <taxon>Gammaproteobacteria</taxon>
        <taxon>Enterobacterales</taxon>
        <taxon>Enterobacteriaceae</taxon>
        <taxon>Klebsiella/Raoultella group</taxon>
        <taxon>Klebsiella</taxon>
        <taxon>Klebsiella pneumoniae complex</taxon>
    </lineage>
</organism>
<sequence length="188" mass="19856">MNLSATILLAFGMSMDAFAASIGKGATLHKPKFSEAVRTGLIFGVIETLTPLVGWGLGMLASQFVLEWNHWIAFILLVFLGGRMIVEGVRGDSDEACDAPRRHGFWLLVTTAFATSLDAMAVGVGLAFLQVSIVTTALAIGCATFLMSTLGIMVGRFIGPLLGKRAEILGGIVLIGIGSEILWSHFAG</sequence>
<comment type="function">
    <text evidence="1">Probably functions as a manganese efflux pump.</text>
</comment>
<comment type="subcellular location">
    <subcellularLocation>
        <location evidence="1">Cell inner membrane</location>
        <topology evidence="1">Multi-pass membrane protein</topology>
    </subcellularLocation>
</comment>
<comment type="similarity">
    <text evidence="1">Belongs to the MntP (TC 9.B.29) family.</text>
</comment>
<evidence type="ECO:0000255" key="1">
    <source>
        <dbReference type="HAMAP-Rule" id="MF_01521"/>
    </source>
</evidence>
<accession>B5XQ52</accession>
<gene>
    <name evidence="1" type="primary">mntP</name>
    <name type="ordered locus">KPK_1956</name>
</gene>
<protein>
    <recommendedName>
        <fullName evidence="1">Putative manganese efflux pump MntP</fullName>
    </recommendedName>
</protein>
<name>MNTP_KLEP3</name>